<gene>
    <name type="primary">exgB</name>
    <name type="ORF">AFUA_2G09350</name>
</gene>
<accession>Q4X1N4</accession>
<proteinExistence type="inferred from homology"/>
<evidence type="ECO:0000250" key="1"/>
<evidence type="ECO:0000255" key="2"/>
<evidence type="ECO:0000305" key="3"/>
<dbReference type="EC" id="3.2.1.75"/>
<dbReference type="EMBL" id="AAHF01000001">
    <property type="protein sequence ID" value="EAL93231.1"/>
    <property type="molecule type" value="Genomic_DNA"/>
</dbReference>
<dbReference type="RefSeq" id="XP_755269.1">
    <property type="nucleotide sequence ID" value="XM_750176.1"/>
</dbReference>
<dbReference type="SMR" id="Q4X1N4"/>
<dbReference type="STRING" id="330879.Q4X1N4"/>
<dbReference type="GlyCosmos" id="Q4X1N4">
    <property type="glycosylation" value="2 sites, No reported glycans"/>
</dbReference>
<dbReference type="EnsemblFungi" id="EAL93231">
    <property type="protein sequence ID" value="EAL93231"/>
    <property type="gene ID" value="AFUA_2G09350"/>
</dbReference>
<dbReference type="GeneID" id="3513261"/>
<dbReference type="KEGG" id="afm:AFUA_2G09350"/>
<dbReference type="VEuPathDB" id="FungiDB:Afu2g09350"/>
<dbReference type="eggNOG" id="ENOG502RBRB">
    <property type="taxonomic scope" value="Eukaryota"/>
</dbReference>
<dbReference type="HOGENOM" id="CLU_004624_7_0_1"/>
<dbReference type="InParanoid" id="Q4X1N4"/>
<dbReference type="OMA" id="WMLPAEW"/>
<dbReference type="OrthoDB" id="1887033at2759"/>
<dbReference type="Proteomes" id="UP000002530">
    <property type="component" value="Chromosome 2"/>
</dbReference>
<dbReference type="GO" id="GO:0005576">
    <property type="term" value="C:extracellular region"/>
    <property type="evidence" value="ECO:0000318"/>
    <property type="project" value="GO_Central"/>
</dbReference>
<dbReference type="GO" id="GO:0046557">
    <property type="term" value="F:glucan endo-1,6-beta-glucosidase activity"/>
    <property type="evidence" value="ECO:0007669"/>
    <property type="project" value="UniProtKB-EC"/>
</dbReference>
<dbReference type="GO" id="GO:0004338">
    <property type="term" value="F:glucan exo-1,3-beta-glucosidase activity"/>
    <property type="evidence" value="ECO:0000318"/>
    <property type="project" value="GO_Central"/>
</dbReference>
<dbReference type="GO" id="GO:0071555">
    <property type="term" value="P:cell wall organization"/>
    <property type="evidence" value="ECO:0007669"/>
    <property type="project" value="UniProtKB-KW"/>
</dbReference>
<dbReference type="GO" id="GO:0009251">
    <property type="term" value="P:glucan catabolic process"/>
    <property type="evidence" value="ECO:0000318"/>
    <property type="project" value="GO_Central"/>
</dbReference>
<dbReference type="FunFam" id="3.20.20.80:FF:000269">
    <property type="entry name" value="Probable glucan endo-1,6-beta-glucosidase B"/>
    <property type="match status" value="1"/>
</dbReference>
<dbReference type="Gene3D" id="3.20.20.80">
    <property type="entry name" value="Glycosidases"/>
    <property type="match status" value="1"/>
</dbReference>
<dbReference type="InterPro" id="IPR001547">
    <property type="entry name" value="Glyco_hydro_5"/>
</dbReference>
<dbReference type="InterPro" id="IPR017853">
    <property type="entry name" value="Glycoside_hydrolase_SF"/>
</dbReference>
<dbReference type="InterPro" id="IPR050386">
    <property type="entry name" value="Glycosyl_hydrolase_5"/>
</dbReference>
<dbReference type="PANTHER" id="PTHR31297">
    <property type="entry name" value="GLUCAN ENDO-1,6-BETA-GLUCOSIDASE B"/>
    <property type="match status" value="1"/>
</dbReference>
<dbReference type="PANTHER" id="PTHR31297:SF39">
    <property type="entry name" value="GLUCAN ENDO-1,6-BETA-GLUCOSIDASE B"/>
    <property type="match status" value="1"/>
</dbReference>
<dbReference type="Pfam" id="PF00150">
    <property type="entry name" value="Cellulase"/>
    <property type="match status" value="1"/>
</dbReference>
<dbReference type="SUPFAM" id="SSF51445">
    <property type="entry name" value="(Trans)glycosidases"/>
    <property type="match status" value="1"/>
</dbReference>
<keyword id="KW-0119">Carbohydrate metabolism</keyword>
<keyword id="KW-0961">Cell wall biogenesis/degradation</keyword>
<keyword id="KW-0325">Glycoprotein</keyword>
<keyword id="KW-0326">Glycosidase</keyword>
<keyword id="KW-0378">Hydrolase</keyword>
<keyword id="KW-0624">Polysaccharide degradation</keyword>
<keyword id="KW-1185">Reference proteome</keyword>
<keyword id="KW-0964">Secreted</keyword>
<keyword id="KW-0732">Signal</keyword>
<sequence length="396" mass="44795">MIRRLAAFSALSGLATAWLPEVNKKITSTNGTNLFTSSNGKIRGVNLGSQFVFEPWIAEKAWSDMGCGGQKSEFDCVSRLGQANANSAFASHWGSWITQDDIAEMVSYGLNTIRVPVGYWMREDLVYSDSEHFPQGGLQYLENLCEWASDAGLYIIIDLHGAPGAQTPQNPFTGQYAPIAGFYQDYQFEGALKFLEWMTTNIHQNDKFRNVGMLEVVNEPVQDAGKVGSMRSSYYPNAFKRIRAAEQSLNIDRNNYLHIQMMDRLWGSGDPNESLTDTYYAAYDDHRYLKWASVAVSKDSYISTSCSDQLNSNTPTIVGEWSLSVPDNVQWNSDWSPDSNKDFYKKWFAAQVTAYERQQGWIFWTWKAQLGDYRWSYQGGLLLTRPGIGDQQVLTL</sequence>
<comment type="function">
    <text evidence="1">Beta-glucanases participate in the metabolism of beta-glucan, the main structural component of the cell wall. Acts on lutean, pustulan and 1,6-oligo-beta-D-glucosides (By similarity).</text>
</comment>
<comment type="catalytic activity">
    <reaction>
        <text>Random hydrolysis of (1-&gt;6)-linkages in (1-&gt;6)-beta-D-glucans.</text>
        <dbReference type="EC" id="3.2.1.75"/>
    </reaction>
</comment>
<comment type="subcellular location">
    <subcellularLocation>
        <location evidence="1">Secreted</location>
    </subcellularLocation>
</comment>
<comment type="similarity">
    <text evidence="3">Belongs to the glycosyl hydrolase 5 (cellulase A) family.</text>
</comment>
<name>EXGB_ASPFU</name>
<reference key="1">
    <citation type="journal article" date="2005" name="Nature">
        <title>Genomic sequence of the pathogenic and allergenic filamentous fungus Aspergillus fumigatus.</title>
        <authorList>
            <person name="Nierman W.C."/>
            <person name="Pain A."/>
            <person name="Anderson M.J."/>
            <person name="Wortman J.R."/>
            <person name="Kim H.S."/>
            <person name="Arroyo J."/>
            <person name="Berriman M."/>
            <person name="Abe K."/>
            <person name="Archer D.B."/>
            <person name="Bermejo C."/>
            <person name="Bennett J.W."/>
            <person name="Bowyer P."/>
            <person name="Chen D."/>
            <person name="Collins M."/>
            <person name="Coulsen R."/>
            <person name="Davies R."/>
            <person name="Dyer P.S."/>
            <person name="Farman M.L."/>
            <person name="Fedorova N."/>
            <person name="Fedorova N.D."/>
            <person name="Feldblyum T.V."/>
            <person name="Fischer R."/>
            <person name="Fosker N."/>
            <person name="Fraser A."/>
            <person name="Garcia J.L."/>
            <person name="Garcia M.J."/>
            <person name="Goble A."/>
            <person name="Goldman G.H."/>
            <person name="Gomi K."/>
            <person name="Griffith-Jones S."/>
            <person name="Gwilliam R."/>
            <person name="Haas B.J."/>
            <person name="Haas H."/>
            <person name="Harris D.E."/>
            <person name="Horiuchi H."/>
            <person name="Huang J."/>
            <person name="Humphray S."/>
            <person name="Jimenez J."/>
            <person name="Keller N."/>
            <person name="Khouri H."/>
            <person name="Kitamoto K."/>
            <person name="Kobayashi T."/>
            <person name="Konzack S."/>
            <person name="Kulkarni R."/>
            <person name="Kumagai T."/>
            <person name="Lafton A."/>
            <person name="Latge J.-P."/>
            <person name="Li W."/>
            <person name="Lord A."/>
            <person name="Lu C."/>
            <person name="Majoros W.H."/>
            <person name="May G.S."/>
            <person name="Miller B.L."/>
            <person name="Mohamoud Y."/>
            <person name="Molina M."/>
            <person name="Monod M."/>
            <person name="Mouyna I."/>
            <person name="Mulligan S."/>
            <person name="Murphy L.D."/>
            <person name="O'Neil S."/>
            <person name="Paulsen I."/>
            <person name="Penalva M.A."/>
            <person name="Pertea M."/>
            <person name="Price C."/>
            <person name="Pritchard B.L."/>
            <person name="Quail M.A."/>
            <person name="Rabbinowitsch E."/>
            <person name="Rawlins N."/>
            <person name="Rajandream M.A."/>
            <person name="Reichard U."/>
            <person name="Renauld H."/>
            <person name="Robson G.D."/>
            <person name="Rodriguez de Cordoba S."/>
            <person name="Rodriguez-Pena J.M."/>
            <person name="Ronning C.M."/>
            <person name="Rutter S."/>
            <person name="Salzberg S.L."/>
            <person name="Sanchez M."/>
            <person name="Sanchez-Ferrero J.C."/>
            <person name="Saunders D."/>
            <person name="Seeger K."/>
            <person name="Squares R."/>
            <person name="Squares S."/>
            <person name="Takeuchi M."/>
            <person name="Tekaia F."/>
            <person name="Turner G."/>
            <person name="Vazquez de Aldana C.R."/>
            <person name="Weidman J."/>
            <person name="White O."/>
            <person name="Woodward J.R."/>
            <person name="Yu J.-H."/>
            <person name="Fraser C.M."/>
            <person name="Galagan J.E."/>
            <person name="Asai K."/>
            <person name="Machida M."/>
            <person name="Hall N."/>
            <person name="Barrell B.G."/>
            <person name="Denning D.W."/>
        </authorList>
    </citation>
    <scope>NUCLEOTIDE SEQUENCE [LARGE SCALE GENOMIC DNA]</scope>
    <source>
        <strain>ATCC MYA-4609 / CBS 101355 / FGSC A1100 / Af293</strain>
    </source>
</reference>
<feature type="signal peptide" evidence="2">
    <location>
        <begin position="1"/>
        <end position="17"/>
    </location>
</feature>
<feature type="chain" id="PRO_0000394707" description="Probable glucan endo-1,6-beta-glucosidase B">
    <location>
        <begin position="18"/>
        <end position="396"/>
    </location>
</feature>
<feature type="active site" description="Proton donor" evidence="1">
    <location>
        <position position="219"/>
    </location>
</feature>
<feature type="active site" description="Nucleophile" evidence="1">
    <location>
        <position position="320"/>
    </location>
</feature>
<feature type="glycosylation site" description="N-linked (GlcNAc...) asparagine" evidence="2">
    <location>
        <position position="30"/>
    </location>
</feature>
<feature type="glycosylation site" description="N-linked (GlcNAc...) asparagine" evidence="2">
    <location>
        <position position="272"/>
    </location>
</feature>
<organism>
    <name type="scientific">Aspergillus fumigatus (strain ATCC MYA-4609 / CBS 101355 / FGSC A1100 / Af293)</name>
    <name type="common">Neosartorya fumigata</name>
    <dbReference type="NCBI Taxonomy" id="330879"/>
    <lineage>
        <taxon>Eukaryota</taxon>
        <taxon>Fungi</taxon>
        <taxon>Dikarya</taxon>
        <taxon>Ascomycota</taxon>
        <taxon>Pezizomycotina</taxon>
        <taxon>Eurotiomycetes</taxon>
        <taxon>Eurotiomycetidae</taxon>
        <taxon>Eurotiales</taxon>
        <taxon>Aspergillaceae</taxon>
        <taxon>Aspergillus</taxon>
        <taxon>Aspergillus subgen. Fumigati</taxon>
    </lineage>
</organism>
<protein>
    <recommendedName>
        <fullName>Probable glucan endo-1,6-beta-glucosidase B</fullName>
        <ecNumber>3.2.1.75</ecNumber>
    </recommendedName>
    <alternativeName>
        <fullName>Beta-1,6-glucanase B</fullName>
    </alternativeName>
    <alternativeName>
        <fullName>Endo-1,6-beta-D-glucanase B</fullName>
    </alternativeName>
    <alternativeName>
        <fullName>Endo-1,6-beta-glucanase B</fullName>
    </alternativeName>
</protein>